<accession>Q2R8L1</accession>
<protein>
    <recommendedName>
        <fullName evidence="5">Disease resistance protein RGA5</fullName>
    </recommendedName>
    <alternativeName>
        <fullName evidence="7">Os11gRGA5</fullName>
    </alternativeName>
</protein>
<organism>
    <name type="scientific">Oryza sativa subsp. japonica</name>
    <name type="common">Rice</name>
    <dbReference type="NCBI Taxonomy" id="39947"/>
    <lineage>
        <taxon>Eukaryota</taxon>
        <taxon>Viridiplantae</taxon>
        <taxon>Streptophyta</taxon>
        <taxon>Embryophyta</taxon>
        <taxon>Tracheophyta</taxon>
        <taxon>Spermatophyta</taxon>
        <taxon>Magnoliopsida</taxon>
        <taxon>Liliopsida</taxon>
        <taxon>Poales</taxon>
        <taxon>Poaceae</taxon>
        <taxon>BOP clade</taxon>
        <taxon>Oryzoideae</taxon>
        <taxon>Oryzeae</taxon>
        <taxon>Oryzinae</taxon>
        <taxon>Oryza</taxon>
        <taxon>Oryza sativa</taxon>
    </lineage>
</organism>
<proteinExistence type="evidence at transcript level"/>
<name>RGA5S_ORYSJ</name>
<sequence>MDAPVSFSLGAMGPLLRKLDSLPVAPEIRLPEPLKDGIELLKEDLEEIGAALVEQSMVDSPSHRARYWMDEVRDLSYHIEDCIDTMFSMRCGGDDGKPRSVRRHKVGRVKVDGFSKTQKPCTRLARIAELRALVREASERHERYQLGDGRASSSSSSSHRVFTAHGQVPAPCRNLVGMDEPKTKLTNMLTDEAELHMKVVCILGSAGIGKTTLAEQVYRKLRWQFDCHAFVRASRKPDMRRLLGAILSQVQLRIRISDTSTVQSLIDNLWEYLQKKRYFIVIDELYETATWDIITSAFPEDNNCSRIMTTAGIEGVALECCSYHSVNIFKMIPLGLDDSAKLFFNRVFGSEQQCPYELNEVSYRITAKCGGLPLAVIIIAGLLASLPCKTELWYNIDGCLCSSVTTDIDLDEILKEIISLGYDNLPHYLKTCLLYLSLYSEGFIIWTADLLKQWISEGFIAVIDGEDIEEVAESYFYNLVNRGMIQSVKTKYNNQVLCTVHHTVFDLIIHKSKEEKFISAIDYSQTMPGNSLEARRLSFHFSNTRYATEVAGITLSQVRSFAFLGLLKCMPSIMEFKLLRVLILEFWGDNHGCMSFNVARICRLFQLRYLKISSQIIIELPAQIRGLKYLETLEIDARVTAIPSDIIHLRSLLHLYFQDGIVLPDGIGCIRSLRTLKYFDLGSNSEENIRSLGQLTNLRDLHLTCSAPKSNQQAKRNLVILASYTGKLGNLKSVKFSPGDSGMDISFLFYGIGISVDRSRTASSLPFSVRTLELPSICIFARLPDWIGQLRKLHTLNLAVRELIENDIDSLAGLPDLIVLSMHIMKAPMERIVFNRKAFPVLKYFKFICGTLRMAFQAGAMANLHRLKLGFNAHKGEKYDNILVGIEHLLNLKKIAVRIGGAAEAKESDRMAAEAALKEAIRKHLMFLDDLDIARVECVKEEYKCIKKKHKIKIEDSISEKNGDSKKQHSVEKKAVWGKTMKNIADSGVFPEDYTMSREQRVAEGFVVGIEKCRAEDAAERIIRNVPVDYDGLGQVSTSKIQDHLPELAPRAVQNEKFGSSNDLSIMIQINKYARLPSYEWRDTDISKLNFRLLRAPMLLEAVTARCHLLDLILIGSNNITVLDLGRPTITKLPASIECLPNLRYLRLQGTQLKSLSEVIVKMPTIRGLDIKNTKTEELPQGILRMKKLSHLSMGEKQKNIQVFMEKMQTLAETVQDSDDLSDETEGIADDEGEFSTRANASTPKVDEDEVDRRANNFIARFRKQITIRNSGFAKKESSIDERLWIRDLDECQLSKRGGRF</sequence>
<gene>
    <name evidence="7" type="primary">RGA5</name>
    <name evidence="8" type="ordered locus">Os11g0225300</name>
    <name evidence="6" type="ordered locus">LOC_Os11g11810</name>
    <name evidence="9" type="ORF">OsJ_33425</name>
</gene>
<feature type="chain" id="PRO_0000444662" description="Disease resistance protein RGA5">
    <location>
        <begin position="1"/>
        <end position="1301"/>
    </location>
</feature>
<feature type="domain" description="NB-ARC" evidence="2">
    <location>
        <begin position="181"/>
        <end position="464"/>
    </location>
</feature>
<feature type="repeat" description="LRR 1" evidence="2">
    <location>
        <begin position="604"/>
        <end position="627"/>
    </location>
</feature>
<feature type="repeat" description="LRR 2" evidence="2">
    <location>
        <begin position="629"/>
        <end position="649"/>
    </location>
</feature>
<feature type="repeat" description="LRR 3" evidence="2">
    <location>
        <begin position="650"/>
        <end position="671"/>
    </location>
</feature>
<feature type="repeat" description="LRR 4" evidence="2">
    <location>
        <begin position="673"/>
        <end position="697"/>
    </location>
</feature>
<feature type="repeat" description="LRR 5" evidence="2">
    <location>
        <begin position="728"/>
        <end position="751"/>
    </location>
</feature>
<feature type="repeat" description="LRR 6" evidence="2">
    <location>
        <begin position="790"/>
        <end position="813"/>
    </location>
</feature>
<feature type="repeat" description="LRR 7" evidence="2">
    <location>
        <begin position="861"/>
        <end position="885"/>
    </location>
</feature>
<feature type="repeat" description="LRR 8" evidence="2">
    <location>
        <begin position="1020"/>
        <end position="1043"/>
    </location>
</feature>
<feature type="repeat" description="LRR 9" evidence="2">
    <location>
        <begin position="1060"/>
        <end position="1083"/>
    </location>
</feature>
<feature type="repeat" description="LRR 10" evidence="2">
    <location>
        <begin position="1117"/>
        <end position="1140"/>
    </location>
</feature>
<feature type="repeat" description="LRR 11" evidence="2">
    <location>
        <begin position="1141"/>
        <end position="1163"/>
    </location>
</feature>
<feature type="repeat" description="LRR 12" evidence="2">
    <location>
        <begin position="1164"/>
        <end position="1186"/>
    </location>
</feature>
<feature type="region of interest" description="Structured coiled coil (CC) domain" evidence="1">
    <location>
        <begin position="1"/>
        <end position="177"/>
    </location>
</feature>
<feature type="region of interest" description="Disordered" evidence="3">
    <location>
        <begin position="1214"/>
        <end position="1249"/>
    </location>
</feature>
<feature type="compositionally biased region" description="Acidic residues" evidence="3">
    <location>
        <begin position="1216"/>
        <end position="1234"/>
    </location>
</feature>
<feature type="sequence conflict" description="In Ref. 7; AK072355." evidence="5" ref="7">
    <original>N</original>
    <variation>Y</variation>
    <location>
        <position position="711"/>
    </location>
</feature>
<feature type="sequence conflict" description="In Ref. 7; AK072355." evidence="5" ref="7">
    <original>K</original>
    <variation>E</variation>
    <location>
        <position position="843"/>
    </location>
</feature>
<reference key="1">
    <citation type="journal article" date="2011" name="Plant J.">
        <title>A multifaceted genomics approach allows the isolation of the rice Pia-blast resistance gene consisting of two adjacent NBS-LRR protein genes.</title>
        <authorList>
            <person name="Okuyama Y."/>
            <person name="Kanzaki H."/>
            <person name="Abe A."/>
            <person name="Yoshida K."/>
            <person name="Tamiru M."/>
            <person name="Saitoh H."/>
            <person name="Fujibe T."/>
            <person name="Matsumura H."/>
            <person name="Shenton M."/>
            <person name="Galam D.C."/>
            <person name="Undan J."/>
            <person name="Ito A."/>
            <person name="Sone T."/>
            <person name="Terauchi R."/>
        </authorList>
    </citation>
    <scope>NUCLEOTIDE SEQUENCE [MRNA]</scope>
    <scope>FUNCTION</scope>
    <scope>TISSUE SPECIFICITY</scope>
    <source>
        <strain evidence="7">cv. Hitomebore</strain>
        <strain evidence="7">cv. Mokoto</strain>
        <strain evidence="7">cv. Nipponbare</strain>
        <tissue evidence="7">Leaf</tissue>
    </source>
</reference>
<reference key="2">
    <citation type="journal article" date="2005" name="BMC Biol.">
        <title>The sequence of rice chromosomes 11 and 12, rich in disease resistance genes and recent gene duplications.</title>
        <authorList>
            <consortium name="The rice chromosomes 11 and 12 sequencing consortia"/>
        </authorList>
    </citation>
    <scope>NUCLEOTIDE SEQUENCE [LARGE SCALE GENOMIC DNA]</scope>
    <source>
        <strain>cv. Nipponbare</strain>
    </source>
</reference>
<reference key="3">
    <citation type="journal article" date="2005" name="Nature">
        <title>The map-based sequence of the rice genome.</title>
        <authorList>
            <consortium name="International rice genome sequencing project (IRGSP)"/>
        </authorList>
    </citation>
    <scope>NUCLEOTIDE SEQUENCE [LARGE SCALE GENOMIC DNA]</scope>
    <source>
        <strain>cv. Nipponbare</strain>
    </source>
</reference>
<reference key="4">
    <citation type="journal article" date="2008" name="Nucleic Acids Res.">
        <title>The rice annotation project database (RAP-DB): 2008 update.</title>
        <authorList>
            <consortium name="The rice annotation project (RAP)"/>
        </authorList>
    </citation>
    <scope>GENOME REANNOTATION</scope>
    <source>
        <strain>cv. Nipponbare</strain>
    </source>
</reference>
<reference key="5">
    <citation type="journal article" date="2013" name="Rice">
        <title>Improvement of the Oryza sativa Nipponbare reference genome using next generation sequence and optical map data.</title>
        <authorList>
            <person name="Kawahara Y."/>
            <person name="de la Bastide M."/>
            <person name="Hamilton J.P."/>
            <person name="Kanamori H."/>
            <person name="McCombie W.R."/>
            <person name="Ouyang S."/>
            <person name="Schwartz D.C."/>
            <person name="Tanaka T."/>
            <person name="Wu J."/>
            <person name="Zhou S."/>
            <person name="Childs K.L."/>
            <person name="Davidson R.M."/>
            <person name="Lin H."/>
            <person name="Quesada-Ocampo L."/>
            <person name="Vaillancourt B."/>
            <person name="Sakai H."/>
            <person name="Lee S.S."/>
            <person name="Kim J."/>
            <person name="Numa H."/>
            <person name="Itoh T."/>
            <person name="Buell C.R."/>
            <person name="Matsumoto T."/>
        </authorList>
    </citation>
    <scope>GENOME REANNOTATION</scope>
    <source>
        <strain>cv. Nipponbare</strain>
    </source>
</reference>
<reference key="6">
    <citation type="journal article" date="2005" name="PLoS Biol.">
        <title>The genomes of Oryza sativa: a history of duplications.</title>
        <authorList>
            <person name="Yu J."/>
            <person name="Wang J."/>
            <person name="Lin W."/>
            <person name="Li S."/>
            <person name="Li H."/>
            <person name="Zhou J."/>
            <person name="Ni P."/>
            <person name="Dong W."/>
            <person name="Hu S."/>
            <person name="Zeng C."/>
            <person name="Zhang J."/>
            <person name="Zhang Y."/>
            <person name="Li R."/>
            <person name="Xu Z."/>
            <person name="Li S."/>
            <person name="Li X."/>
            <person name="Zheng H."/>
            <person name="Cong L."/>
            <person name="Lin L."/>
            <person name="Yin J."/>
            <person name="Geng J."/>
            <person name="Li G."/>
            <person name="Shi J."/>
            <person name="Liu J."/>
            <person name="Lv H."/>
            <person name="Li J."/>
            <person name="Wang J."/>
            <person name="Deng Y."/>
            <person name="Ran L."/>
            <person name="Shi X."/>
            <person name="Wang X."/>
            <person name="Wu Q."/>
            <person name="Li C."/>
            <person name="Ren X."/>
            <person name="Wang J."/>
            <person name="Wang X."/>
            <person name="Li D."/>
            <person name="Liu D."/>
            <person name="Zhang X."/>
            <person name="Ji Z."/>
            <person name="Zhao W."/>
            <person name="Sun Y."/>
            <person name="Zhang Z."/>
            <person name="Bao J."/>
            <person name="Han Y."/>
            <person name="Dong L."/>
            <person name="Ji J."/>
            <person name="Chen P."/>
            <person name="Wu S."/>
            <person name="Liu J."/>
            <person name="Xiao Y."/>
            <person name="Bu D."/>
            <person name="Tan J."/>
            <person name="Yang L."/>
            <person name="Ye C."/>
            <person name="Zhang J."/>
            <person name="Xu J."/>
            <person name="Zhou Y."/>
            <person name="Yu Y."/>
            <person name="Zhang B."/>
            <person name="Zhuang S."/>
            <person name="Wei H."/>
            <person name="Liu B."/>
            <person name="Lei M."/>
            <person name="Yu H."/>
            <person name="Li Y."/>
            <person name="Xu H."/>
            <person name="Wei S."/>
            <person name="He X."/>
            <person name="Fang L."/>
            <person name="Zhang Z."/>
            <person name="Zhang Y."/>
            <person name="Huang X."/>
            <person name="Su Z."/>
            <person name="Tong W."/>
            <person name="Li J."/>
            <person name="Tong Z."/>
            <person name="Li S."/>
            <person name="Ye J."/>
            <person name="Wang L."/>
            <person name="Fang L."/>
            <person name="Lei T."/>
            <person name="Chen C.-S."/>
            <person name="Chen H.-C."/>
            <person name="Xu Z."/>
            <person name="Li H."/>
            <person name="Huang H."/>
            <person name="Zhang F."/>
            <person name="Xu H."/>
            <person name="Li N."/>
            <person name="Zhao C."/>
            <person name="Li S."/>
            <person name="Dong L."/>
            <person name="Huang Y."/>
            <person name="Li L."/>
            <person name="Xi Y."/>
            <person name="Qi Q."/>
            <person name="Li W."/>
            <person name="Zhang B."/>
            <person name="Hu W."/>
            <person name="Zhang Y."/>
            <person name="Tian X."/>
            <person name="Jiao Y."/>
            <person name="Liang X."/>
            <person name="Jin J."/>
            <person name="Gao L."/>
            <person name="Zheng W."/>
            <person name="Hao B."/>
            <person name="Liu S.-M."/>
            <person name="Wang W."/>
            <person name="Yuan L."/>
            <person name="Cao M."/>
            <person name="McDermott J."/>
            <person name="Samudrala R."/>
            <person name="Wang J."/>
            <person name="Wong G.K.-S."/>
            <person name="Yang H."/>
        </authorList>
    </citation>
    <scope>NUCLEOTIDE SEQUENCE [LARGE SCALE GENOMIC DNA]</scope>
    <source>
        <strain>cv. Nipponbare</strain>
    </source>
</reference>
<reference key="7">
    <citation type="journal article" date="2003" name="Science">
        <title>Collection, mapping, and annotation of over 28,000 cDNA clones from japonica rice.</title>
        <authorList>
            <consortium name="The rice full-length cDNA consortium"/>
        </authorList>
    </citation>
    <scope>NUCLEOTIDE SEQUENCE [LARGE SCALE MRNA]</scope>
    <source>
        <strain>cv. Nipponbare</strain>
    </source>
</reference>
<evidence type="ECO:0000250" key="1">
    <source>
        <dbReference type="UniProtKB" id="F7J0N2"/>
    </source>
</evidence>
<evidence type="ECO:0000255" key="2"/>
<evidence type="ECO:0000256" key="3">
    <source>
        <dbReference type="SAM" id="MobiDB-lite"/>
    </source>
</evidence>
<evidence type="ECO:0000269" key="4">
    <source>
    </source>
</evidence>
<evidence type="ECO:0000305" key="5"/>
<evidence type="ECO:0000312" key="6">
    <source>
        <dbReference type="EMBL" id="ABA92208.1"/>
    </source>
</evidence>
<evidence type="ECO:0000312" key="7">
    <source>
        <dbReference type="EMBL" id="BAK39932.1"/>
    </source>
</evidence>
<evidence type="ECO:0000312" key="8">
    <source>
        <dbReference type="EMBL" id="BAT13285.1"/>
    </source>
</evidence>
<evidence type="ECO:0000312" key="9">
    <source>
        <dbReference type="EMBL" id="EEE51878.1"/>
    </source>
</evidence>
<comment type="function">
    <text evidence="4">Probable disease resistance protein. Resistance proteins guard the plant against pathogens that contain an appropriate avirulence protein via an indirect interaction with this avirulence protein. That triggers a defense system including the hypersensitive response, which restricts the pathogen growth. At the opposite of cultivars Aichi asahi and Sasanishiki, the cultivars Nipponbare, Mokoto and Hitomebore don't recognize the effector avirulence protein AVR-Pia from M.oryzae.</text>
</comment>
<comment type="tissue specificity">
    <text evidence="4">Expressed in leaves.</text>
</comment>
<comment type="similarity">
    <text evidence="5">Belongs to the disease resistance NB-LRR family.</text>
</comment>
<dbReference type="EMBL" id="AB604629">
    <property type="protein sequence ID" value="BAK39932.1"/>
    <property type="molecule type" value="mRNA"/>
</dbReference>
<dbReference type="EMBL" id="DP000010">
    <property type="protein sequence ID" value="ABA92208.1"/>
    <property type="molecule type" value="Genomic_DNA"/>
</dbReference>
<dbReference type="EMBL" id="AP008217">
    <property type="protein sequence ID" value="BAF27900.1"/>
    <property type="molecule type" value="Genomic_DNA"/>
</dbReference>
<dbReference type="EMBL" id="AP014967">
    <property type="protein sequence ID" value="BAT13285.1"/>
    <property type="molecule type" value="Genomic_DNA"/>
</dbReference>
<dbReference type="EMBL" id="CM000148">
    <property type="protein sequence ID" value="EEE51878.1"/>
    <property type="molecule type" value="Genomic_DNA"/>
</dbReference>
<dbReference type="EMBL" id="AK072355">
    <property type="status" value="NOT_ANNOTATED_CDS"/>
    <property type="molecule type" value="mRNA"/>
</dbReference>
<dbReference type="SMR" id="Q2R8L1"/>
<dbReference type="FunCoup" id="Q2R8L1">
    <property type="interactions" value="6"/>
</dbReference>
<dbReference type="STRING" id="39947.Q2R8L1"/>
<dbReference type="PaxDb" id="39947-Q2R8L1"/>
<dbReference type="EnsemblPlants" id="Os11t0225300-01">
    <property type="protein sequence ID" value="Os11t0225300-01"/>
    <property type="gene ID" value="Os11g0225300"/>
</dbReference>
<dbReference type="Gramene" id="Os11t0225300-01">
    <property type="protein sequence ID" value="Os11t0225300-01"/>
    <property type="gene ID" value="Os11g0225300"/>
</dbReference>
<dbReference type="KEGG" id="dosa:Os11g0225300"/>
<dbReference type="eggNOG" id="KOG4658">
    <property type="taxonomic scope" value="Eukaryota"/>
</dbReference>
<dbReference type="HOGENOM" id="CLU_000837_25_1_1"/>
<dbReference type="InParanoid" id="Q2R8L1"/>
<dbReference type="OMA" id="PMERIVF"/>
<dbReference type="Proteomes" id="UP000000763">
    <property type="component" value="Chromosome 11"/>
</dbReference>
<dbReference type="Proteomes" id="UP000007752">
    <property type="component" value="Chromosome 11"/>
</dbReference>
<dbReference type="Proteomes" id="UP000059680">
    <property type="component" value="Chromosome 11"/>
</dbReference>
<dbReference type="ExpressionAtlas" id="Q2R8L1">
    <property type="expression patterns" value="baseline and differential"/>
</dbReference>
<dbReference type="GO" id="GO:0043531">
    <property type="term" value="F:ADP binding"/>
    <property type="evidence" value="ECO:0007669"/>
    <property type="project" value="InterPro"/>
</dbReference>
<dbReference type="GO" id="GO:0005524">
    <property type="term" value="F:ATP binding"/>
    <property type="evidence" value="ECO:0007669"/>
    <property type="project" value="UniProtKB-KW"/>
</dbReference>
<dbReference type="GO" id="GO:0098542">
    <property type="term" value="P:defense response to other organism"/>
    <property type="evidence" value="ECO:0000318"/>
    <property type="project" value="GO_Central"/>
</dbReference>
<dbReference type="FunFam" id="1.10.10.10:FF:000322">
    <property type="entry name" value="Probable disease resistance protein At1g63360"/>
    <property type="match status" value="1"/>
</dbReference>
<dbReference type="Gene3D" id="1.20.5.4130">
    <property type="match status" value="1"/>
</dbReference>
<dbReference type="Gene3D" id="1.10.8.430">
    <property type="entry name" value="Helical domain of apoptotic protease-activating factors"/>
    <property type="match status" value="1"/>
</dbReference>
<dbReference type="Gene3D" id="3.40.50.300">
    <property type="entry name" value="P-loop containing nucleotide triphosphate hydrolases"/>
    <property type="match status" value="1"/>
</dbReference>
<dbReference type="Gene3D" id="3.80.10.10">
    <property type="entry name" value="Ribonuclease Inhibitor"/>
    <property type="match status" value="2"/>
</dbReference>
<dbReference type="Gene3D" id="1.10.10.10">
    <property type="entry name" value="Winged helix-like DNA-binding domain superfamily/Winged helix DNA-binding domain"/>
    <property type="match status" value="1"/>
</dbReference>
<dbReference type="InterPro" id="IPR042197">
    <property type="entry name" value="Apaf_helical"/>
</dbReference>
<dbReference type="InterPro" id="IPR044974">
    <property type="entry name" value="Disease_R_plants"/>
</dbReference>
<dbReference type="InterPro" id="IPR032675">
    <property type="entry name" value="LRR_dom_sf"/>
</dbReference>
<dbReference type="InterPro" id="IPR055414">
    <property type="entry name" value="LRR_R13L4/SHOC2-like"/>
</dbReference>
<dbReference type="InterPro" id="IPR002182">
    <property type="entry name" value="NB-ARC"/>
</dbReference>
<dbReference type="InterPro" id="IPR027417">
    <property type="entry name" value="P-loop_NTPase"/>
</dbReference>
<dbReference type="InterPro" id="IPR041118">
    <property type="entry name" value="Rx_N"/>
</dbReference>
<dbReference type="InterPro" id="IPR036388">
    <property type="entry name" value="WH-like_DNA-bd_sf"/>
</dbReference>
<dbReference type="PANTHER" id="PTHR23155">
    <property type="entry name" value="DISEASE RESISTANCE PROTEIN RP"/>
    <property type="match status" value="1"/>
</dbReference>
<dbReference type="PANTHER" id="PTHR23155:SF1046">
    <property type="entry name" value="OS11G0226933 PROTEIN"/>
    <property type="match status" value="1"/>
</dbReference>
<dbReference type="Pfam" id="PF23598">
    <property type="entry name" value="LRR_14"/>
    <property type="match status" value="2"/>
</dbReference>
<dbReference type="Pfam" id="PF00931">
    <property type="entry name" value="NB-ARC"/>
    <property type="match status" value="1"/>
</dbReference>
<dbReference type="Pfam" id="PF18052">
    <property type="entry name" value="Rx_N"/>
    <property type="match status" value="1"/>
</dbReference>
<dbReference type="Pfam" id="PF23559">
    <property type="entry name" value="WH_DRP"/>
    <property type="match status" value="1"/>
</dbReference>
<dbReference type="PRINTS" id="PR00364">
    <property type="entry name" value="DISEASERSIST"/>
</dbReference>
<dbReference type="SUPFAM" id="SSF52058">
    <property type="entry name" value="L domain-like"/>
    <property type="match status" value="2"/>
</dbReference>
<dbReference type="SUPFAM" id="SSF52540">
    <property type="entry name" value="P-loop containing nucleoside triphosphate hydrolases"/>
    <property type="match status" value="1"/>
</dbReference>
<keyword id="KW-0067">ATP-binding</keyword>
<keyword id="KW-0175">Coiled coil</keyword>
<keyword id="KW-0433">Leucine-rich repeat</keyword>
<keyword id="KW-0547">Nucleotide-binding</keyword>
<keyword id="KW-0611">Plant defense</keyword>
<keyword id="KW-1185">Reference proteome</keyword>
<keyword id="KW-0677">Repeat</keyword>